<gene>
    <name evidence="1" type="primary">adk</name>
    <name type="ordered locus">RSc2533</name>
    <name type="ORF">RS05765</name>
</gene>
<reference key="1">
    <citation type="journal article" date="2002" name="Nature">
        <title>Genome sequence of the plant pathogen Ralstonia solanacearum.</title>
        <authorList>
            <person name="Salanoubat M."/>
            <person name="Genin S."/>
            <person name="Artiguenave F."/>
            <person name="Gouzy J."/>
            <person name="Mangenot S."/>
            <person name="Arlat M."/>
            <person name="Billault A."/>
            <person name="Brottier P."/>
            <person name="Camus J.-C."/>
            <person name="Cattolico L."/>
            <person name="Chandler M."/>
            <person name="Choisne N."/>
            <person name="Claudel-Renard C."/>
            <person name="Cunnac S."/>
            <person name="Demange N."/>
            <person name="Gaspin C."/>
            <person name="Lavie M."/>
            <person name="Moisan A."/>
            <person name="Robert C."/>
            <person name="Saurin W."/>
            <person name="Schiex T."/>
            <person name="Siguier P."/>
            <person name="Thebault P."/>
            <person name="Whalen M."/>
            <person name="Wincker P."/>
            <person name="Levy M."/>
            <person name="Weissenbach J."/>
            <person name="Boucher C.A."/>
        </authorList>
    </citation>
    <scope>NUCLEOTIDE SEQUENCE [LARGE SCALE GENOMIC DNA]</scope>
    <source>
        <strain>ATCC BAA-1114 / GMI1000</strain>
    </source>
</reference>
<sequence length="222" mass="24224">MRLILLGAPGAGKGTQAKFICERFGIPQISTGDMLRAAVKAGTPLGIEAKKVMDAGGLVSDDIIIGLVKDRLQQSDCKNGYLFDGFPRTIPQAEAMKDAGVPIDYVLEIDVPFDAIIERMSGRRVHVASGRTYHVKYNPPKNEGQDDETGDPLIQRDDDKEETVRKRLSVYENQTRPLVDYYSGWAENGNGAAKVAPPKYRKISGIGNVEDITGRVFGALEA</sequence>
<organism>
    <name type="scientific">Ralstonia nicotianae (strain ATCC BAA-1114 / GMI1000)</name>
    <name type="common">Ralstonia solanacearum</name>
    <dbReference type="NCBI Taxonomy" id="267608"/>
    <lineage>
        <taxon>Bacteria</taxon>
        <taxon>Pseudomonadati</taxon>
        <taxon>Pseudomonadota</taxon>
        <taxon>Betaproteobacteria</taxon>
        <taxon>Burkholderiales</taxon>
        <taxon>Burkholderiaceae</taxon>
        <taxon>Ralstonia</taxon>
        <taxon>Ralstonia solanacearum species complex</taxon>
    </lineage>
</organism>
<keyword id="KW-0067">ATP-binding</keyword>
<keyword id="KW-0963">Cytoplasm</keyword>
<keyword id="KW-0418">Kinase</keyword>
<keyword id="KW-0545">Nucleotide biosynthesis</keyword>
<keyword id="KW-0547">Nucleotide-binding</keyword>
<keyword id="KW-1185">Reference proteome</keyword>
<keyword id="KW-0808">Transferase</keyword>
<proteinExistence type="inferred from homology"/>
<protein>
    <recommendedName>
        <fullName evidence="1">Adenylate kinase</fullName>
        <shortName evidence="1">AK</shortName>
        <ecNumber evidence="1">2.7.4.3</ecNumber>
    </recommendedName>
    <alternativeName>
        <fullName evidence="1">ATP-AMP transphosphorylase</fullName>
    </alternativeName>
    <alternativeName>
        <fullName evidence="1">ATP:AMP phosphotransferase</fullName>
    </alternativeName>
    <alternativeName>
        <fullName evidence="1">Adenylate monophosphate kinase</fullName>
    </alternativeName>
</protein>
<feature type="chain" id="PRO_0000158834" description="Adenylate kinase">
    <location>
        <begin position="1"/>
        <end position="222"/>
    </location>
</feature>
<feature type="region of interest" description="NMP" evidence="1">
    <location>
        <begin position="30"/>
        <end position="59"/>
    </location>
</feature>
<feature type="region of interest" description="LID" evidence="1">
    <location>
        <begin position="122"/>
        <end position="159"/>
    </location>
</feature>
<feature type="region of interest" description="Disordered" evidence="2">
    <location>
        <begin position="135"/>
        <end position="162"/>
    </location>
</feature>
<feature type="binding site" evidence="1">
    <location>
        <begin position="10"/>
        <end position="15"/>
    </location>
    <ligand>
        <name>ATP</name>
        <dbReference type="ChEBI" id="CHEBI:30616"/>
    </ligand>
</feature>
<feature type="binding site" evidence="1">
    <location>
        <position position="31"/>
    </location>
    <ligand>
        <name>AMP</name>
        <dbReference type="ChEBI" id="CHEBI:456215"/>
    </ligand>
</feature>
<feature type="binding site" evidence="1">
    <location>
        <position position="36"/>
    </location>
    <ligand>
        <name>AMP</name>
        <dbReference type="ChEBI" id="CHEBI:456215"/>
    </ligand>
</feature>
<feature type="binding site" evidence="1">
    <location>
        <begin position="57"/>
        <end position="59"/>
    </location>
    <ligand>
        <name>AMP</name>
        <dbReference type="ChEBI" id="CHEBI:456215"/>
    </ligand>
</feature>
<feature type="binding site" evidence="1">
    <location>
        <begin position="85"/>
        <end position="88"/>
    </location>
    <ligand>
        <name>AMP</name>
        <dbReference type="ChEBI" id="CHEBI:456215"/>
    </ligand>
</feature>
<feature type="binding site" evidence="1">
    <location>
        <position position="92"/>
    </location>
    <ligand>
        <name>AMP</name>
        <dbReference type="ChEBI" id="CHEBI:456215"/>
    </ligand>
</feature>
<feature type="binding site" evidence="1">
    <location>
        <position position="123"/>
    </location>
    <ligand>
        <name>ATP</name>
        <dbReference type="ChEBI" id="CHEBI:30616"/>
    </ligand>
</feature>
<feature type="binding site" evidence="1">
    <location>
        <begin position="132"/>
        <end position="133"/>
    </location>
    <ligand>
        <name>ATP</name>
        <dbReference type="ChEBI" id="CHEBI:30616"/>
    </ligand>
</feature>
<feature type="binding site" evidence="1">
    <location>
        <position position="156"/>
    </location>
    <ligand>
        <name>AMP</name>
        <dbReference type="ChEBI" id="CHEBI:456215"/>
    </ligand>
</feature>
<feature type="binding site" evidence="1">
    <location>
        <position position="167"/>
    </location>
    <ligand>
        <name>AMP</name>
        <dbReference type="ChEBI" id="CHEBI:456215"/>
    </ligand>
</feature>
<feature type="binding site" evidence="1">
    <location>
        <position position="207"/>
    </location>
    <ligand>
        <name>ATP</name>
        <dbReference type="ChEBI" id="CHEBI:30616"/>
    </ligand>
</feature>
<name>KAD_RALN1</name>
<comment type="function">
    <text evidence="1">Catalyzes the reversible transfer of the terminal phosphate group between ATP and AMP. Plays an important role in cellular energy homeostasis and in adenine nucleotide metabolism.</text>
</comment>
<comment type="catalytic activity">
    <reaction evidence="1">
        <text>AMP + ATP = 2 ADP</text>
        <dbReference type="Rhea" id="RHEA:12973"/>
        <dbReference type="ChEBI" id="CHEBI:30616"/>
        <dbReference type="ChEBI" id="CHEBI:456215"/>
        <dbReference type="ChEBI" id="CHEBI:456216"/>
        <dbReference type="EC" id="2.7.4.3"/>
    </reaction>
</comment>
<comment type="pathway">
    <text evidence="1">Purine metabolism; AMP biosynthesis via salvage pathway; AMP from ADP: step 1/1.</text>
</comment>
<comment type="subunit">
    <text evidence="1">Monomer.</text>
</comment>
<comment type="subcellular location">
    <subcellularLocation>
        <location evidence="1">Cytoplasm</location>
    </subcellularLocation>
</comment>
<comment type="domain">
    <text evidence="1">Consists of three domains, a large central CORE domain and two small peripheral domains, NMPbind and LID, which undergo movements during catalysis. The LID domain closes over the site of phosphoryl transfer upon ATP binding. Assembling and dissambling the active center during each catalytic cycle provides an effective means to prevent ATP hydrolysis.</text>
</comment>
<comment type="similarity">
    <text evidence="1">Belongs to the adenylate kinase family.</text>
</comment>
<evidence type="ECO:0000255" key="1">
    <source>
        <dbReference type="HAMAP-Rule" id="MF_00235"/>
    </source>
</evidence>
<evidence type="ECO:0000256" key="2">
    <source>
        <dbReference type="SAM" id="MobiDB-lite"/>
    </source>
</evidence>
<dbReference type="EC" id="2.7.4.3" evidence="1"/>
<dbReference type="EMBL" id="AL646052">
    <property type="protein sequence ID" value="CAD16240.1"/>
    <property type="molecule type" value="Genomic_DNA"/>
</dbReference>
<dbReference type="RefSeq" id="WP_011002448.1">
    <property type="nucleotide sequence ID" value="NC_003295.1"/>
</dbReference>
<dbReference type="SMR" id="Q8XWE1"/>
<dbReference type="STRING" id="267608.RSc2533"/>
<dbReference type="EnsemblBacteria" id="CAD16240">
    <property type="protein sequence ID" value="CAD16240"/>
    <property type="gene ID" value="RSc2533"/>
</dbReference>
<dbReference type="KEGG" id="rso:RSc2533"/>
<dbReference type="eggNOG" id="COG0563">
    <property type="taxonomic scope" value="Bacteria"/>
</dbReference>
<dbReference type="HOGENOM" id="CLU_032354_1_2_4"/>
<dbReference type="UniPathway" id="UPA00588">
    <property type="reaction ID" value="UER00649"/>
</dbReference>
<dbReference type="Proteomes" id="UP000001436">
    <property type="component" value="Chromosome"/>
</dbReference>
<dbReference type="GO" id="GO:0005737">
    <property type="term" value="C:cytoplasm"/>
    <property type="evidence" value="ECO:0007669"/>
    <property type="project" value="UniProtKB-SubCell"/>
</dbReference>
<dbReference type="GO" id="GO:0004017">
    <property type="term" value="F:adenylate kinase activity"/>
    <property type="evidence" value="ECO:0007669"/>
    <property type="project" value="UniProtKB-UniRule"/>
</dbReference>
<dbReference type="GO" id="GO:0005524">
    <property type="term" value="F:ATP binding"/>
    <property type="evidence" value="ECO:0007669"/>
    <property type="project" value="UniProtKB-UniRule"/>
</dbReference>
<dbReference type="GO" id="GO:0044209">
    <property type="term" value="P:AMP salvage"/>
    <property type="evidence" value="ECO:0007669"/>
    <property type="project" value="UniProtKB-UniRule"/>
</dbReference>
<dbReference type="CDD" id="cd01428">
    <property type="entry name" value="ADK"/>
    <property type="match status" value="1"/>
</dbReference>
<dbReference type="FunFam" id="3.40.50.300:FF:000106">
    <property type="entry name" value="Adenylate kinase mitochondrial"/>
    <property type="match status" value="1"/>
</dbReference>
<dbReference type="Gene3D" id="3.40.50.300">
    <property type="entry name" value="P-loop containing nucleotide triphosphate hydrolases"/>
    <property type="match status" value="1"/>
</dbReference>
<dbReference type="HAMAP" id="MF_00235">
    <property type="entry name" value="Adenylate_kinase_Adk"/>
    <property type="match status" value="1"/>
</dbReference>
<dbReference type="InterPro" id="IPR006259">
    <property type="entry name" value="Adenyl_kin_sub"/>
</dbReference>
<dbReference type="InterPro" id="IPR000850">
    <property type="entry name" value="Adenylat/UMP-CMP_kin"/>
</dbReference>
<dbReference type="InterPro" id="IPR033690">
    <property type="entry name" value="Adenylat_kinase_CS"/>
</dbReference>
<dbReference type="InterPro" id="IPR007862">
    <property type="entry name" value="Adenylate_kinase_lid-dom"/>
</dbReference>
<dbReference type="InterPro" id="IPR027417">
    <property type="entry name" value="P-loop_NTPase"/>
</dbReference>
<dbReference type="NCBIfam" id="TIGR01351">
    <property type="entry name" value="adk"/>
    <property type="match status" value="1"/>
</dbReference>
<dbReference type="NCBIfam" id="NF001379">
    <property type="entry name" value="PRK00279.1-1"/>
    <property type="match status" value="1"/>
</dbReference>
<dbReference type="NCBIfam" id="NF001380">
    <property type="entry name" value="PRK00279.1-2"/>
    <property type="match status" value="1"/>
</dbReference>
<dbReference type="NCBIfam" id="NF001381">
    <property type="entry name" value="PRK00279.1-3"/>
    <property type="match status" value="1"/>
</dbReference>
<dbReference type="PANTHER" id="PTHR23359">
    <property type="entry name" value="NUCLEOTIDE KINASE"/>
    <property type="match status" value="1"/>
</dbReference>
<dbReference type="Pfam" id="PF00406">
    <property type="entry name" value="ADK"/>
    <property type="match status" value="1"/>
</dbReference>
<dbReference type="Pfam" id="PF05191">
    <property type="entry name" value="ADK_lid"/>
    <property type="match status" value="1"/>
</dbReference>
<dbReference type="PRINTS" id="PR00094">
    <property type="entry name" value="ADENYLTKNASE"/>
</dbReference>
<dbReference type="SUPFAM" id="SSF52540">
    <property type="entry name" value="P-loop containing nucleoside triphosphate hydrolases"/>
    <property type="match status" value="1"/>
</dbReference>
<dbReference type="PROSITE" id="PS00113">
    <property type="entry name" value="ADENYLATE_KINASE"/>
    <property type="match status" value="1"/>
</dbReference>
<accession>Q8XWE1</accession>